<comment type="function">
    <text evidence="1">One of the components of the core complex of photosystem II (PSII). It binds chlorophyll and helps catalyze the primary light-induced photochemical processes of PSII. PSII is a light-driven water:plastoquinone oxidoreductase, using light energy to abstract electrons from H(2)O, generating O(2) and a proton gradient subsequently used for ATP formation.</text>
</comment>
<comment type="cofactor">
    <text evidence="1">Binds multiple chlorophylls. PSII binds additional chlorophylls, carotenoids and specific lipids.</text>
</comment>
<comment type="subunit">
    <text evidence="1">PSII is composed of 1 copy each of membrane proteins PsbA, PsbB, PsbC, PsbD, PsbE, PsbF, PsbH, PsbI, PsbJ, PsbK, PsbL, PsbM, PsbT, PsbX, PsbY, PsbZ, Psb30/Ycf12, at least 3 peripheral proteins of the oxygen-evolving complex and a large number of cofactors. It forms dimeric complexes.</text>
</comment>
<comment type="subcellular location">
    <subcellularLocation>
        <location evidence="1">Plastid</location>
        <location evidence="1">Chloroplast thylakoid membrane</location>
        <topology evidence="1">Multi-pass membrane protein</topology>
    </subcellularLocation>
</comment>
<comment type="similarity">
    <text evidence="1">Belongs to the PsbB/PsbC family. PsbB subfamily.</text>
</comment>
<organism>
    <name type="scientific">Cucumis sativus</name>
    <name type="common">Cucumber</name>
    <dbReference type="NCBI Taxonomy" id="3659"/>
    <lineage>
        <taxon>Eukaryota</taxon>
        <taxon>Viridiplantae</taxon>
        <taxon>Streptophyta</taxon>
        <taxon>Embryophyta</taxon>
        <taxon>Tracheophyta</taxon>
        <taxon>Spermatophyta</taxon>
        <taxon>Magnoliopsida</taxon>
        <taxon>eudicotyledons</taxon>
        <taxon>Gunneridae</taxon>
        <taxon>Pentapetalae</taxon>
        <taxon>rosids</taxon>
        <taxon>fabids</taxon>
        <taxon>Cucurbitales</taxon>
        <taxon>Cucurbitaceae</taxon>
        <taxon>Benincaseae</taxon>
        <taxon>Cucumis</taxon>
    </lineage>
</organism>
<dbReference type="EMBL" id="DQ119058">
    <property type="protein sequence ID" value="AAZ94676.1"/>
    <property type="molecule type" value="Genomic_DNA"/>
</dbReference>
<dbReference type="EMBL" id="AJ970307">
    <property type="protein sequence ID" value="CAJ00785.1"/>
    <property type="molecule type" value="Genomic_DNA"/>
</dbReference>
<dbReference type="EMBL" id="DQ865975">
    <property type="protein sequence ID" value="ABI97442.1"/>
    <property type="molecule type" value="Genomic_DNA"/>
</dbReference>
<dbReference type="EMBL" id="DQ865976">
    <property type="protein sequence ID" value="ABI98771.1"/>
    <property type="molecule type" value="Genomic_DNA"/>
</dbReference>
<dbReference type="RefSeq" id="YP_247626.1">
    <property type="nucleotide sequence ID" value="NC_007144.1"/>
</dbReference>
<dbReference type="SMR" id="Q2QD63"/>
<dbReference type="GeneID" id="3429276"/>
<dbReference type="KEGG" id="csv:3429276"/>
<dbReference type="eggNOG" id="ENOG502QRV6">
    <property type="taxonomic scope" value="Eukaryota"/>
</dbReference>
<dbReference type="OrthoDB" id="1843540at2759"/>
<dbReference type="GO" id="GO:0009535">
    <property type="term" value="C:chloroplast thylakoid membrane"/>
    <property type="evidence" value="ECO:0007669"/>
    <property type="project" value="UniProtKB-SubCell"/>
</dbReference>
<dbReference type="GO" id="GO:0009523">
    <property type="term" value="C:photosystem II"/>
    <property type="evidence" value="ECO:0007669"/>
    <property type="project" value="UniProtKB-KW"/>
</dbReference>
<dbReference type="GO" id="GO:0016168">
    <property type="term" value="F:chlorophyll binding"/>
    <property type="evidence" value="ECO:0007669"/>
    <property type="project" value="UniProtKB-UniRule"/>
</dbReference>
<dbReference type="GO" id="GO:0045156">
    <property type="term" value="F:electron transporter, transferring electrons within the cyclic electron transport pathway of photosynthesis activity"/>
    <property type="evidence" value="ECO:0007669"/>
    <property type="project" value="InterPro"/>
</dbReference>
<dbReference type="GO" id="GO:0009772">
    <property type="term" value="P:photosynthetic electron transport in photosystem II"/>
    <property type="evidence" value="ECO:0007669"/>
    <property type="project" value="InterPro"/>
</dbReference>
<dbReference type="FunFam" id="3.10.680.10:FF:000001">
    <property type="entry name" value="Photosystem II CP47 reaction center protein"/>
    <property type="match status" value="1"/>
</dbReference>
<dbReference type="Gene3D" id="3.10.680.10">
    <property type="entry name" value="Photosystem II CP47 reaction center protein"/>
    <property type="match status" value="1"/>
</dbReference>
<dbReference type="HAMAP" id="MF_01495">
    <property type="entry name" value="PSII_PsbB_CP47"/>
    <property type="match status" value="1"/>
</dbReference>
<dbReference type="InterPro" id="IPR000932">
    <property type="entry name" value="PS_antenna-like"/>
</dbReference>
<dbReference type="InterPro" id="IPR036001">
    <property type="entry name" value="PS_II_antenna-like_sf"/>
</dbReference>
<dbReference type="InterPro" id="IPR017486">
    <property type="entry name" value="PSII_PsbB"/>
</dbReference>
<dbReference type="NCBIfam" id="TIGR03039">
    <property type="entry name" value="PS_II_CP47"/>
    <property type="match status" value="1"/>
</dbReference>
<dbReference type="PANTHER" id="PTHR33180">
    <property type="entry name" value="PHOTOSYSTEM II CP43 REACTION CENTER PROTEIN"/>
    <property type="match status" value="1"/>
</dbReference>
<dbReference type="PANTHER" id="PTHR33180:SF35">
    <property type="entry name" value="PHOTOSYSTEM II CP47 REACTION CENTER PROTEIN"/>
    <property type="match status" value="1"/>
</dbReference>
<dbReference type="Pfam" id="PF00421">
    <property type="entry name" value="PSII"/>
    <property type="match status" value="1"/>
</dbReference>
<dbReference type="SUPFAM" id="SSF161077">
    <property type="entry name" value="Photosystem II antenna protein-like"/>
    <property type="match status" value="1"/>
</dbReference>
<reference key="1">
    <citation type="journal article" date="2006" name="Plant Cell Rep.">
        <title>Complete sequence and organization of the cucumber (Cucumis sativus L. cv. Baekmibaekdadagi) chloroplast genome.</title>
        <authorList>
            <person name="Kim J.-S."/>
            <person name="Jung J.D."/>
            <person name="Lee J.-A."/>
            <person name="Park H.-W."/>
            <person name="Oh K.-H."/>
            <person name="Jeong W.J."/>
            <person name="Choi D.-W."/>
            <person name="Liu J.R."/>
            <person name="Cho K.Y."/>
        </authorList>
    </citation>
    <scope>NUCLEOTIDE SEQUENCE [LARGE SCALE GENOMIC DNA]</scope>
    <source>
        <strain>cv. Baekmibaekdadagi</strain>
    </source>
</reference>
<reference key="2">
    <citation type="journal article" date="2007" name="Cell. Mol. Biol. Lett.">
        <title>The complete structure of the cucumber (Cucumis sativus L.) chloroplast genome: its composition and comparative analysis.</title>
        <authorList>
            <person name="Plader W.W."/>
            <person name="Yukawa Y."/>
            <person name="Sugiura M."/>
            <person name="Malepszy S."/>
        </authorList>
    </citation>
    <scope>NUCLEOTIDE SEQUENCE [LARGE SCALE GENOMIC DNA]</scope>
    <source>
        <strain>cv. Borszczagowski</strain>
    </source>
</reference>
<reference key="3">
    <citation type="journal article" date="2007" name="Genome">
        <title>Sequencing cucumber (Cucumis sativus L.) chloroplast genomes identifies differences between chilling-tolerant and -susceptible cucumber lines.</title>
        <authorList>
            <person name="Chung S.-M."/>
            <person name="Gordon V.S."/>
            <person name="Staub J.E."/>
        </authorList>
    </citation>
    <scope>NUCLEOTIDE SEQUENCE [LARGE SCALE GENOMIC DNA]</scope>
    <source>
        <strain>cv. Chipper</strain>
        <strain>cv. Gy14</strain>
    </source>
</reference>
<keyword id="KW-0148">Chlorophyll</keyword>
<keyword id="KW-0150">Chloroplast</keyword>
<keyword id="KW-0157">Chromophore</keyword>
<keyword id="KW-0472">Membrane</keyword>
<keyword id="KW-0602">Photosynthesis</keyword>
<keyword id="KW-0604">Photosystem II</keyword>
<keyword id="KW-0934">Plastid</keyword>
<keyword id="KW-0793">Thylakoid</keyword>
<keyword id="KW-0812">Transmembrane</keyword>
<keyword id="KW-1133">Transmembrane helix</keyword>
<proteinExistence type="inferred from homology"/>
<geneLocation type="chloroplast"/>
<protein>
    <recommendedName>
        <fullName evidence="1">Photosystem II CP47 reaction center protein</fullName>
    </recommendedName>
    <alternativeName>
        <fullName evidence="1">PSII 47 kDa protein</fullName>
    </alternativeName>
    <alternativeName>
        <fullName evidence="1">Protein CP-47</fullName>
    </alternativeName>
</protein>
<evidence type="ECO:0000255" key="1">
    <source>
        <dbReference type="HAMAP-Rule" id="MF_01495"/>
    </source>
</evidence>
<accession>Q2QD63</accession>
<accession>Q4VZI8</accession>
<sequence>MGLPWYRVHTVVLNDPGRLLSVHIMHTALVAGWAGSMALYELAVFDPSDPVLDPMWRQGMFVIPFMTRLGITNSWGGWSITGGTITNPGIWSYEGVAGAHILFSGLCFLAAIWHWVYWDLEIFSDERTGKPSLDLPKIFGIHLFLSGLGCFGFGAFHVTGLYGPGIWVSDPYGLTGRVQAVNPAWGVEGFDPFVPGGIASHHIAAGTLGILAGLFHLSVRPPQRLYKGLRMGNIETVLSSSIAAVFFAAFVVAGTMWYGSATTPIELFGPTRYQWDQGYFQQEIYRRVSTGLAENQSLSEAWSKIPEKLAFYDYIGNNPAKGGLFRAGSMDNGDGIAVGWLGHPVFRDKEGRELFVRRMPTFFETFPVVLVDGDGIVRADVPFRRAESKYSVEQVGVTVEFYGGELNGVSYSDPATVKKYARRAQLGEIFELDRATLKSDGVFRSSPRGWFTFGHASFALLFFFGHIWHGARTLFRDVFAGIDPDLDTQVEFGAFQKLGDPTTKRV</sequence>
<gene>
    <name evidence="1" type="primary">psbB</name>
    <name type="ordered locus">CsCp068</name>
</gene>
<name>PSBB_CUCSA</name>
<feature type="chain" id="PRO_0000359814" description="Photosystem II CP47 reaction center protein">
    <location>
        <begin position="1"/>
        <end position="506"/>
    </location>
</feature>
<feature type="transmembrane region" description="Helical" evidence="1">
    <location>
        <begin position="21"/>
        <end position="36"/>
    </location>
</feature>
<feature type="transmembrane region" description="Helical" evidence="1">
    <location>
        <begin position="101"/>
        <end position="115"/>
    </location>
</feature>
<feature type="transmembrane region" description="Helical" evidence="1">
    <location>
        <begin position="140"/>
        <end position="156"/>
    </location>
</feature>
<feature type="transmembrane region" description="Helical" evidence="1">
    <location>
        <begin position="203"/>
        <end position="218"/>
    </location>
</feature>
<feature type="transmembrane region" description="Helical" evidence="1">
    <location>
        <begin position="237"/>
        <end position="252"/>
    </location>
</feature>
<feature type="transmembrane region" description="Helical" evidence="1">
    <location>
        <begin position="457"/>
        <end position="472"/>
    </location>
</feature>